<keyword id="KW-0249">Electron transport</keyword>
<keyword id="KW-0349">Heme</keyword>
<keyword id="KW-0408">Iron</keyword>
<keyword id="KW-0472">Membrane</keyword>
<keyword id="KW-0479">Metal-binding</keyword>
<keyword id="KW-0496">Mitochondrion</keyword>
<keyword id="KW-0999">Mitochondrion inner membrane</keyword>
<keyword id="KW-0679">Respiratory chain</keyword>
<keyword id="KW-0812">Transmembrane</keyword>
<keyword id="KW-1133">Transmembrane helix</keyword>
<keyword id="KW-0813">Transport</keyword>
<keyword id="KW-0830">Ubiquinone</keyword>
<feature type="chain" id="PRO_0000060802" description="Cytochrome b">
    <location>
        <begin position="1"/>
        <end position="380"/>
    </location>
</feature>
<feature type="transmembrane region" description="Helical" evidence="2">
    <location>
        <begin position="34"/>
        <end position="54"/>
    </location>
</feature>
<feature type="transmembrane region" description="Helical" evidence="2">
    <location>
        <begin position="78"/>
        <end position="99"/>
    </location>
</feature>
<feature type="transmembrane region" description="Helical" evidence="2">
    <location>
        <begin position="114"/>
        <end position="134"/>
    </location>
</feature>
<feature type="transmembrane region" description="Helical" evidence="2">
    <location>
        <begin position="179"/>
        <end position="199"/>
    </location>
</feature>
<feature type="transmembrane region" description="Helical" evidence="2">
    <location>
        <begin position="227"/>
        <end position="247"/>
    </location>
</feature>
<feature type="transmembrane region" description="Helical" evidence="2">
    <location>
        <begin position="289"/>
        <end position="309"/>
    </location>
</feature>
<feature type="transmembrane region" description="Helical" evidence="2">
    <location>
        <begin position="321"/>
        <end position="341"/>
    </location>
</feature>
<feature type="transmembrane region" description="Helical" evidence="2">
    <location>
        <begin position="348"/>
        <end position="368"/>
    </location>
</feature>
<feature type="binding site" description="axial binding residue" evidence="2">
    <location>
        <position position="84"/>
    </location>
    <ligand>
        <name>heme b</name>
        <dbReference type="ChEBI" id="CHEBI:60344"/>
        <label>b562</label>
    </ligand>
    <ligandPart>
        <name>Fe</name>
        <dbReference type="ChEBI" id="CHEBI:18248"/>
    </ligandPart>
</feature>
<feature type="binding site" description="axial binding residue" evidence="2">
    <location>
        <position position="98"/>
    </location>
    <ligand>
        <name>heme b</name>
        <dbReference type="ChEBI" id="CHEBI:60344"/>
        <label>b566</label>
    </ligand>
    <ligandPart>
        <name>Fe</name>
        <dbReference type="ChEBI" id="CHEBI:18248"/>
    </ligandPart>
</feature>
<feature type="binding site" description="axial binding residue" evidence="2">
    <location>
        <position position="183"/>
    </location>
    <ligand>
        <name>heme b</name>
        <dbReference type="ChEBI" id="CHEBI:60344"/>
        <label>b562</label>
    </ligand>
    <ligandPart>
        <name>Fe</name>
        <dbReference type="ChEBI" id="CHEBI:18248"/>
    </ligandPart>
</feature>
<feature type="binding site" description="axial binding residue" evidence="2">
    <location>
        <position position="197"/>
    </location>
    <ligand>
        <name>heme b</name>
        <dbReference type="ChEBI" id="CHEBI:60344"/>
        <label>b566</label>
    </ligand>
    <ligandPart>
        <name>Fe</name>
        <dbReference type="ChEBI" id="CHEBI:18248"/>
    </ligandPart>
</feature>
<feature type="binding site" evidence="2">
    <location>
        <position position="202"/>
    </location>
    <ligand>
        <name>a ubiquinone</name>
        <dbReference type="ChEBI" id="CHEBI:16389"/>
    </ligand>
</feature>
<proteinExistence type="inferred from homology"/>
<geneLocation type="mitochondrion"/>
<protein>
    <recommendedName>
        <fullName>Cytochrome b</fullName>
    </recommendedName>
    <alternativeName>
        <fullName>Complex III subunit 3</fullName>
    </alternativeName>
    <alternativeName>
        <fullName>Complex III subunit III</fullName>
    </alternativeName>
    <alternativeName>
        <fullName>Cytochrome b-c1 complex subunit 3</fullName>
    </alternativeName>
    <alternativeName>
        <fullName>Ubiquinol-cytochrome-c reductase complex cytochrome b subunit</fullName>
    </alternativeName>
</protein>
<name>CYB_COLST</name>
<reference key="1">
    <citation type="journal article" date="2000" name="Mol. Phylogenet. Evol.">
        <title>Higher-level phylogeny of trogoniformes.</title>
        <authorList>
            <person name="Espinosa de los Monteros A."/>
        </authorList>
    </citation>
    <scope>NUCLEOTIDE SEQUENCE [GENOMIC DNA]</scope>
</reference>
<dbReference type="EMBL" id="U89175">
    <property type="protein sequence ID" value="AAC35376.1"/>
    <property type="molecule type" value="Genomic_DNA"/>
</dbReference>
<dbReference type="SMR" id="O79927"/>
<dbReference type="GO" id="GO:0005743">
    <property type="term" value="C:mitochondrial inner membrane"/>
    <property type="evidence" value="ECO:0007669"/>
    <property type="project" value="UniProtKB-SubCell"/>
</dbReference>
<dbReference type="GO" id="GO:0045275">
    <property type="term" value="C:respiratory chain complex III"/>
    <property type="evidence" value="ECO:0007669"/>
    <property type="project" value="InterPro"/>
</dbReference>
<dbReference type="GO" id="GO:0046872">
    <property type="term" value="F:metal ion binding"/>
    <property type="evidence" value="ECO:0007669"/>
    <property type="project" value="UniProtKB-KW"/>
</dbReference>
<dbReference type="GO" id="GO:0008121">
    <property type="term" value="F:ubiquinol-cytochrome-c reductase activity"/>
    <property type="evidence" value="ECO:0007669"/>
    <property type="project" value="InterPro"/>
</dbReference>
<dbReference type="GO" id="GO:0006122">
    <property type="term" value="P:mitochondrial electron transport, ubiquinol to cytochrome c"/>
    <property type="evidence" value="ECO:0007669"/>
    <property type="project" value="TreeGrafter"/>
</dbReference>
<dbReference type="CDD" id="cd00290">
    <property type="entry name" value="cytochrome_b_C"/>
    <property type="match status" value="1"/>
</dbReference>
<dbReference type="CDD" id="cd00284">
    <property type="entry name" value="Cytochrome_b_N"/>
    <property type="match status" value="1"/>
</dbReference>
<dbReference type="FunFam" id="1.20.810.10:FF:000002">
    <property type="entry name" value="Cytochrome b"/>
    <property type="match status" value="1"/>
</dbReference>
<dbReference type="Gene3D" id="1.20.810.10">
    <property type="entry name" value="Cytochrome Bc1 Complex, Chain C"/>
    <property type="match status" value="1"/>
</dbReference>
<dbReference type="InterPro" id="IPR005798">
    <property type="entry name" value="Cyt_b/b6_C"/>
</dbReference>
<dbReference type="InterPro" id="IPR036150">
    <property type="entry name" value="Cyt_b/b6_C_sf"/>
</dbReference>
<dbReference type="InterPro" id="IPR005797">
    <property type="entry name" value="Cyt_b/b6_N"/>
</dbReference>
<dbReference type="InterPro" id="IPR027387">
    <property type="entry name" value="Cytb/b6-like_sf"/>
</dbReference>
<dbReference type="InterPro" id="IPR030689">
    <property type="entry name" value="Cytochrome_b"/>
</dbReference>
<dbReference type="InterPro" id="IPR048260">
    <property type="entry name" value="Cytochrome_b_C_euk/bac"/>
</dbReference>
<dbReference type="InterPro" id="IPR048259">
    <property type="entry name" value="Cytochrome_b_N_euk/bac"/>
</dbReference>
<dbReference type="InterPro" id="IPR016174">
    <property type="entry name" value="Di-haem_cyt_TM"/>
</dbReference>
<dbReference type="PANTHER" id="PTHR19271">
    <property type="entry name" value="CYTOCHROME B"/>
    <property type="match status" value="1"/>
</dbReference>
<dbReference type="PANTHER" id="PTHR19271:SF16">
    <property type="entry name" value="CYTOCHROME B"/>
    <property type="match status" value="1"/>
</dbReference>
<dbReference type="Pfam" id="PF00032">
    <property type="entry name" value="Cytochrom_B_C"/>
    <property type="match status" value="1"/>
</dbReference>
<dbReference type="Pfam" id="PF00033">
    <property type="entry name" value="Cytochrome_B"/>
    <property type="match status" value="1"/>
</dbReference>
<dbReference type="PIRSF" id="PIRSF038885">
    <property type="entry name" value="COB"/>
    <property type="match status" value="1"/>
</dbReference>
<dbReference type="SUPFAM" id="SSF81648">
    <property type="entry name" value="a domain/subunit of cytochrome bc1 complex (Ubiquinol-cytochrome c reductase)"/>
    <property type="match status" value="1"/>
</dbReference>
<dbReference type="SUPFAM" id="SSF81342">
    <property type="entry name" value="Transmembrane di-heme cytochromes"/>
    <property type="match status" value="1"/>
</dbReference>
<dbReference type="PROSITE" id="PS51003">
    <property type="entry name" value="CYTB_CTER"/>
    <property type="match status" value="1"/>
</dbReference>
<dbReference type="PROSITE" id="PS51002">
    <property type="entry name" value="CYTB_NTER"/>
    <property type="match status" value="1"/>
</dbReference>
<accession>O79927</accession>
<organism>
    <name type="scientific">Colius striatus</name>
    <name type="common">Speckled mousebird</name>
    <dbReference type="NCBI Taxonomy" id="57412"/>
    <lineage>
        <taxon>Eukaryota</taxon>
        <taxon>Metazoa</taxon>
        <taxon>Chordata</taxon>
        <taxon>Craniata</taxon>
        <taxon>Vertebrata</taxon>
        <taxon>Euteleostomi</taxon>
        <taxon>Archelosauria</taxon>
        <taxon>Archosauria</taxon>
        <taxon>Dinosauria</taxon>
        <taxon>Saurischia</taxon>
        <taxon>Theropoda</taxon>
        <taxon>Coelurosauria</taxon>
        <taxon>Aves</taxon>
        <taxon>Neognathae</taxon>
        <taxon>Neoaves</taxon>
        <taxon>Telluraves</taxon>
        <taxon>Coraciimorphae</taxon>
        <taxon>Coliiformes</taxon>
        <taxon>Coliidae</taxon>
        <taxon>Colius</taxon>
    </lineage>
</organism>
<evidence type="ECO:0000250" key="1"/>
<evidence type="ECO:0000250" key="2">
    <source>
        <dbReference type="UniProtKB" id="P00157"/>
    </source>
</evidence>
<evidence type="ECO:0000255" key="3">
    <source>
        <dbReference type="PROSITE-ProRule" id="PRU00967"/>
    </source>
</evidence>
<evidence type="ECO:0000255" key="4">
    <source>
        <dbReference type="PROSITE-ProRule" id="PRU00968"/>
    </source>
</evidence>
<comment type="function">
    <text evidence="2">Component of the ubiquinol-cytochrome c reductase complex (complex III or cytochrome b-c1 complex) that is part of the mitochondrial respiratory chain. The b-c1 complex mediates electron transfer from ubiquinol to cytochrome c. Contributes to the generation of a proton gradient across the mitochondrial membrane that is then used for ATP synthesis.</text>
</comment>
<comment type="cofactor">
    <cofactor evidence="2">
        <name>heme b</name>
        <dbReference type="ChEBI" id="CHEBI:60344"/>
    </cofactor>
    <text evidence="2">Binds 2 heme b groups non-covalently.</text>
</comment>
<comment type="subunit">
    <text evidence="2">The cytochrome bc1 complex contains 11 subunits: 3 respiratory subunits (MT-CYB, CYC1 and UQCRFS1), 2 core proteins (UQCRC1 and UQCRC2) and 6 low-molecular weight proteins (UQCRH/QCR6, UQCRB/QCR7, UQCRQ/QCR8, UQCR10/QCR9, UQCR11/QCR10 and a cleavage product of UQCRFS1). This cytochrome bc1 complex then forms a dimer.</text>
</comment>
<comment type="subcellular location">
    <subcellularLocation>
        <location evidence="2">Mitochondrion inner membrane</location>
        <topology evidence="2">Multi-pass membrane protein</topology>
    </subcellularLocation>
</comment>
<comment type="miscellaneous">
    <text evidence="1">Heme 1 (or BL or b562) is low-potential and absorbs at about 562 nm, and heme 2 (or BH or b566) is high-potential and absorbs at about 566 nm.</text>
</comment>
<comment type="similarity">
    <text evidence="3 4">Belongs to the cytochrome b family.</text>
</comment>
<comment type="caution">
    <text evidence="2">The full-length protein contains only eight transmembrane helices, not nine as predicted by bioinformatics tools.</text>
</comment>
<sequence>MAPNLRKSHPLLKMINNSLIDLPTPSNISVWWNFGSLLGICLLTQIMTGLLLAAHYTADTTLAFSSVAHTCRNVQYGWLIRNLHANGASFFFICIYFHIGRGFYYGSYLYKETWNTGVILLLTLMATAFVGYVLPWGQMSFWGATVITNLFSAVPYIGQSLVEWAWGGFSVDNPTLTRFFTLHFLLPFAIAGITLIHLTFLHESGSNNPLGIISSCDKIPFHPYFSLKDILGFTCMFLPLTTLALFSPNLLGDPENFTPANPLVTPPHIKPEWYFLFAYAILRSIPYKLGGVLALAASVRVLFLCPLLHKSKQRLTTLRPLSQLLFWTLTANPFILTWVGSQPVEHPFIIIGQLASITYFTIILILFPITQTLENKMLKY</sequence>
<gene>
    <name type="primary">MT-CYB</name>
    <name type="synonym">COB</name>
    <name type="synonym">CYTB</name>
    <name type="synonym">MTCYB</name>
</gene>